<evidence type="ECO:0000250" key="1"/>
<evidence type="ECO:0000250" key="2">
    <source>
        <dbReference type="UniProtKB" id="Q13505"/>
    </source>
</evidence>
<evidence type="ECO:0000255" key="3"/>
<evidence type="ECO:0000305" key="4"/>
<feature type="chain" id="PRO_0000320057" description="Metaxin-1">
    <location>
        <begin position="1"/>
        <end position="317"/>
    </location>
</feature>
<feature type="transmembrane region" description="Helical" evidence="3">
    <location>
        <begin position="164"/>
        <end position="184"/>
    </location>
</feature>
<feature type="cross-link" description="Glycyl lysine isopeptide (Lys-Gly) (interchain with G-Cter in ubiquitin)" evidence="2">
    <location>
        <position position="38"/>
    </location>
</feature>
<feature type="cross-link" description="Glycyl lysine isopeptide (Lys-Gly) (interchain with G-Cter in ubiquitin)" evidence="2">
    <location>
        <position position="41"/>
    </location>
</feature>
<feature type="cross-link" description="Glycyl lysine isopeptide (Lys-Gly) (interchain with G-Cter in ubiquitin)" evidence="2">
    <location>
        <position position="78"/>
    </location>
</feature>
<protein>
    <recommendedName>
        <fullName>Metaxin-1</fullName>
    </recommendedName>
    <alternativeName>
        <fullName>Mitochondrial outer membrane import complex protein 1</fullName>
    </alternativeName>
</protein>
<comment type="function">
    <text evidence="1">Involved in transport of proteins into the mitochondrion. Essential for embryonic development (By similarity).</text>
</comment>
<comment type="subunit">
    <text evidence="2">Interacts with MTX2/metaxin-2 (By similarity). Associates with the mitochondrial contact site and cristae organizing system (MICOS) complex, composed of at least MICOS10/MIC10, CHCHD3/MIC19, CHCHD6/MIC25, APOOL/MIC27, IMMT/MIC60, APOO/MIC23/MIC26 and QIL1/MIC13 (By similarity). This complex was also known under the names MINOS or MitOS complex (By similarity). The MICOS complex associates with mitochondrial outer membrane proteins SAMM50, MTX1 and MTX2 (together described as components of the mitochondrial outer membrane sorting assembly machinery (SAM) complex) and DNAJC11, mitochondrial inner membrane protein TMEM11 and with HSPA9 (By similarity). The MICOS and SAM complexes together with DNAJC11 are part of a large protein complex spanning both membranes termed the mitochondrial intermembrane space bridging (MIB) complex (By similarity). Interacts with ARMC1 (By similarity).</text>
</comment>
<comment type="subcellular location">
    <subcellularLocation>
        <location evidence="1">Mitochondrion outer membrane</location>
    </subcellularLocation>
</comment>
<comment type="PTM">
    <text evidence="2">Ubiquitinated by PRKN during mitophagy, leading to its degradation and enhancement of mitophagy. Deubiquitinated by USP30.</text>
</comment>
<comment type="similarity">
    <text evidence="4">Belongs to the metaxin family.</text>
</comment>
<comment type="sequence caution" evidence="4">
    <conflict type="erroneous initiation">
        <sequence resource="EMBL-CDS" id="BAF91494"/>
    </conflict>
</comment>
<organism>
    <name type="scientific">Sus scrofa</name>
    <name type="common">Pig</name>
    <dbReference type="NCBI Taxonomy" id="9823"/>
    <lineage>
        <taxon>Eukaryota</taxon>
        <taxon>Metazoa</taxon>
        <taxon>Chordata</taxon>
        <taxon>Craniata</taxon>
        <taxon>Vertebrata</taxon>
        <taxon>Euteleostomi</taxon>
        <taxon>Mammalia</taxon>
        <taxon>Eutheria</taxon>
        <taxon>Laurasiatheria</taxon>
        <taxon>Artiodactyla</taxon>
        <taxon>Suina</taxon>
        <taxon>Suidae</taxon>
        <taxon>Sus</taxon>
    </lineage>
</organism>
<name>MTX1_PIG</name>
<dbReference type="EMBL" id="AB239841">
    <property type="protein sequence ID" value="BAF91494.1"/>
    <property type="status" value="ALT_INIT"/>
    <property type="molecule type" value="mRNA"/>
</dbReference>
<dbReference type="EMBL" id="DQ402035">
    <property type="protein sequence ID" value="ABD62977.1"/>
    <property type="molecule type" value="mRNA"/>
</dbReference>
<dbReference type="RefSeq" id="NP_001034839.1">
    <property type="nucleotide sequence ID" value="NM_001039750.1"/>
</dbReference>
<dbReference type="SMR" id="Q27HK4"/>
<dbReference type="FunCoup" id="Q27HK4">
    <property type="interactions" value="335"/>
</dbReference>
<dbReference type="STRING" id="9823.ENSSSCP00000006951"/>
<dbReference type="PaxDb" id="9823-ENSSSCP00000006951"/>
<dbReference type="PeptideAtlas" id="Q27HK4"/>
<dbReference type="GeneID" id="664654"/>
<dbReference type="KEGG" id="ssc:664654"/>
<dbReference type="CTD" id="4580"/>
<dbReference type="eggNOG" id="KOG3028">
    <property type="taxonomic scope" value="Eukaryota"/>
</dbReference>
<dbReference type="HOGENOM" id="CLU_044137_5_0_1"/>
<dbReference type="InParanoid" id="Q27HK4"/>
<dbReference type="OMA" id="PIPFNFY"/>
<dbReference type="OrthoDB" id="5835136at2759"/>
<dbReference type="TreeFam" id="TF313422"/>
<dbReference type="Reactome" id="R-SSC-9013404">
    <property type="pathway name" value="RAC2 GTPase cycle"/>
</dbReference>
<dbReference type="Proteomes" id="UP000008227">
    <property type="component" value="Unplaced"/>
</dbReference>
<dbReference type="Proteomes" id="UP000314985">
    <property type="component" value="Unplaced"/>
</dbReference>
<dbReference type="Proteomes" id="UP000694570">
    <property type="component" value="Unplaced"/>
</dbReference>
<dbReference type="Proteomes" id="UP000694571">
    <property type="component" value="Unplaced"/>
</dbReference>
<dbReference type="Proteomes" id="UP000694720">
    <property type="component" value="Unplaced"/>
</dbReference>
<dbReference type="Proteomes" id="UP000694722">
    <property type="component" value="Unplaced"/>
</dbReference>
<dbReference type="Proteomes" id="UP000694723">
    <property type="component" value="Unplaced"/>
</dbReference>
<dbReference type="Proteomes" id="UP000694724">
    <property type="component" value="Unplaced"/>
</dbReference>
<dbReference type="Proteomes" id="UP000694725">
    <property type="component" value="Unplaced"/>
</dbReference>
<dbReference type="Proteomes" id="UP000694726">
    <property type="component" value="Unplaced"/>
</dbReference>
<dbReference type="Proteomes" id="UP000694727">
    <property type="component" value="Unplaced"/>
</dbReference>
<dbReference type="Proteomes" id="UP000694728">
    <property type="component" value="Unplaced"/>
</dbReference>
<dbReference type="GO" id="GO:0005737">
    <property type="term" value="C:cytoplasm"/>
    <property type="evidence" value="ECO:0000318"/>
    <property type="project" value="GO_Central"/>
</dbReference>
<dbReference type="GO" id="GO:0001401">
    <property type="term" value="C:SAM complex"/>
    <property type="evidence" value="ECO:0000318"/>
    <property type="project" value="GO_Central"/>
</dbReference>
<dbReference type="GO" id="GO:0007005">
    <property type="term" value="P:mitochondrion organization"/>
    <property type="evidence" value="ECO:0000318"/>
    <property type="project" value="GO_Central"/>
</dbReference>
<dbReference type="GO" id="GO:0015031">
    <property type="term" value="P:protein transport"/>
    <property type="evidence" value="ECO:0007669"/>
    <property type="project" value="UniProtKB-KW"/>
</dbReference>
<dbReference type="CDD" id="cd03212">
    <property type="entry name" value="GST_C_Metaxin1_3"/>
    <property type="match status" value="1"/>
</dbReference>
<dbReference type="CDD" id="cd03078">
    <property type="entry name" value="GST_N_Metaxin1_like"/>
    <property type="match status" value="1"/>
</dbReference>
<dbReference type="FunFam" id="1.20.1050.10:FF:000058">
    <property type="entry name" value="metaxin-1"/>
    <property type="match status" value="1"/>
</dbReference>
<dbReference type="Gene3D" id="1.20.1050.10">
    <property type="match status" value="1"/>
</dbReference>
<dbReference type="InterPro" id="IPR036282">
    <property type="entry name" value="Glutathione-S-Trfase_C_sf"/>
</dbReference>
<dbReference type="InterPro" id="IPR040079">
    <property type="entry name" value="Glutathione_S-Trfase"/>
</dbReference>
<dbReference type="InterPro" id="IPR017410">
    <property type="entry name" value="Metaxin1/3"/>
</dbReference>
<dbReference type="InterPro" id="IPR033468">
    <property type="entry name" value="Metaxin_GST"/>
</dbReference>
<dbReference type="InterPro" id="IPR050931">
    <property type="entry name" value="Mito_Protein_Transport_Metaxin"/>
</dbReference>
<dbReference type="InterPro" id="IPR019564">
    <property type="entry name" value="Sam37/metaxin_N"/>
</dbReference>
<dbReference type="PANTHER" id="PTHR12289">
    <property type="entry name" value="METAXIN RELATED"/>
    <property type="match status" value="1"/>
</dbReference>
<dbReference type="PANTHER" id="PTHR12289:SF34">
    <property type="entry name" value="METAXIN-1"/>
    <property type="match status" value="1"/>
</dbReference>
<dbReference type="Pfam" id="PF17171">
    <property type="entry name" value="GST_C_6"/>
    <property type="match status" value="1"/>
</dbReference>
<dbReference type="Pfam" id="PF10568">
    <property type="entry name" value="Tom37"/>
    <property type="match status" value="1"/>
</dbReference>
<dbReference type="PIRSF" id="PIRSF038150">
    <property type="entry name" value="Metaxin"/>
    <property type="match status" value="1"/>
</dbReference>
<dbReference type="SFLD" id="SFLDS00019">
    <property type="entry name" value="Glutathione_Transferase_(cytos"/>
    <property type="match status" value="1"/>
</dbReference>
<dbReference type="SFLD" id="SFLDG01180">
    <property type="entry name" value="SUF1"/>
    <property type="match status" value="1"/>
</dbReference>
<dbReference type="SUPFAM" id="SSF47616">
    <property type="entry name" value="GST C-terminal domain-like"/>
    <property type="match status" value="1"/>
</dbReference>
<sequence length="317" mass="35769">MAAPMELFCWSGGWGLPSVDLDSLAVLTYARFTGAPLKVHKITNPWRSPSGTLPALRTSQGEVISVPHKIITHLRKEKYNADYDLSARQGADTLAFMSLLEEKLLPVLIHTFWVDAKNYVEVTRKWYAEAMPFPLNFFLPGRMQRQYMERLQLLCGEHRPEEEEELEKELYQEARECLTLLSQRLGAQKFFFGDAPASLDAFVFSYLALLQQAKLPSGKLQAHLRGLHNLCAYCTHILSLYFPWEGAEVPRPRQTPASSETEEEPYRRRNQILSVLAGLAAMAGYALLSGIVSIQRAPPARAPSTRALGMAEEDEEE</sequence>
<reference key="1">
    <citation type="submission" date="2005-10" db="EMBL/GenBank/DDBJ databases">
        <title>Gene structure of porcine MTX1 gene.</title>
        <authorList>
            <person name="Ogawa T.E."/>
            <person name="Morozumi T."/>
            <person name="Suzuki K."/>
            <person name="Awata T."/>
            <person name="Uenishi H."/>
        </authorList>
    </citation>
    <scope>NUCLEOTIDE SEQUENCE [MRNA]</scope>
</reference>
<reference key="2">
    <citation type="submission" date="2006-02" db="EMBL/GenBank/DDBJ databases">
        <title>Sus scrofa metaxin 1: cDNA and protein structure.</title>
        <authorList>
            <person name="Adolph K.W."/>
        </authorList>
    </citation>
    <scope>NUCLEOTIDE SEQUENCE [MRNA]</scope>
    <source>
        <tissue>Thymus</tissue>
    </source>
</reference>
<gene>
    <name type="primary">MTX1</name>
</gene>
<keyword id="KW-1017">Isopeptide bond</keyword>
<keyword id="KW-0472">Membrane</keyword>
<keyword id="KW-0496">Mitochondrion</keyword>
<keyword id="KW-1000">Mitochondrion outer membrane</keyword>
<keyword id="KW-0653">Protein transport</keyword>
<keyword id="KW-1185">Reference proteome</keyword>
<keyword id="KW-0812">Transmembrane</keyword>
<keyword id="KW-1133">Transmembrane helix</keyword>
<keyword id="KW-0813">Transport</keyword>
<keyword id="KW-0832">Ubl conjugation</keyword>
<accession>Q27HK4</accession>
<accession>A8QW42</accession>
<proteinExistence type="evidence at transcript level"/>